<accession>Q60452</accession>
<evidence type="ECO:0000250" key="1"/>
<evidence type="ECO:0000250" key="2">
    <source>
        <dbReference type="UniProtKB" id="P18074"/>
    </source>
</evidence>
<evidence type="ECO:0000255" key="3"/>
<evidence type="ECO:0000255" key="4">
    <source>
        <dbReference type="PROSITE-ProRule" id="PRU00541"/>
    </source>
</evidence>
<evidence type="ECO:0000269" key="5">
    <source>
    </source>
</evidence>
<evidence type="ECO:0000269" key="6">
    <source>
    </source>
</evidence>
<evidence type="ECO:0000303" key="7">
    <source>
    </source>
</evidence>
<evidence type="ECO:0000303" key="8">
    <source>
    </source>
</evidence>
<evidence type="ECO:0000305" key="9"/>
<evidence type="ECO:0000305" key="10">
    <source>
    </source>
</evidence>
<organism>
    <name type="scientific">Cricetulus griseus</name>
    <name type="common">Chinese hamster</name>
    <name type="synonym">Cricetulus barabensis griseus</name>
    <dbReference type="NCBI Taxonomy" id="10029"/>
    <lineage>
        <taxon>Eukaryota</taxon>
        <taxon>Metazoa</taxon>
        <taxon>Chordata</taxon>
        <taxon>Craniata</taxon>
        <taxon>Vertebrata</taxon>
        <taxon>Euteleostomi</taxon>
        <taxon>Mammalia</taxon>
        <taxon>Eutheria</taxon>
        <taxon>Euarchontoglires</taxon>
        <taxon>Glires</taxon>
        <taxon>Rodentia</taxon>
        <taxon>Myomorpha</taxon>
        <taxon>Muroidea</taxon>
        <taxon>Cricetidae</taxon>
        <taxon>Cricetinae</taxon>
        <taxon>Cricetulus</taxon>
    </lineage>
</organism>
<comment type="function">
    <text evidence="2 5">ATP-dependent 5'-3' DNA helicase (PubMed:11182546). Component of the general transcription and DNA repair factor IIH (TFIIH) core complex which is involved in general and transcription-coupled nucleotide excision repair (NER) of damaged DNA (PubMed:11182546). When complexed to CDK-activating kinase (CAK), involved in transcription by RNA polymerase II (PubMed:11182546). In NER, TFIIH acts by opening DNA around the lesion to allow the excision of the damaged oligonucleotide and its replacement by a new DNA fragment. The ATP-dependent helicase activity of XPD/ERCC2 is required for DNA opening. In transcription, TFIIH has an essential role in transcription initiation. When the pre-initiation complex (PIC) has been established, TFIIH is required for promoter opening and promoter escape. Phosphorylation of the C-terminal tail (CTD) of the largest subunit of RNA polymerase II by the kinase module CAK controls the initiation of transcription. XPD/ERCC2 acts by forming a bridge between CAK and the core-TFIIH complex. Involved in the regulation of vitamin-D receptor activity. As part of the mitotic spindle-associated MMXD complex it plays a role in chromosome segregation. Might have a role in aging process and could play a causative role in the generation of skin cancers.</text>
</comment>
<comment type="catalytic activity">
    <reaction evidence="5">
        <text>Couples ATP hydrolysis with the unwinding of duplex DNA at the replication fork by translocating in the 5'-3' direction. This creates two antiparallel DNA single strands (ssDNA). The leading ssDNA polymer is the template for DNA polymerase III holoenzyme which synthesizes a continuous strand.</text>
        <dbReference type="EC" id="5.6.2.3"/>
    </reaction>
</comment>
<comment type="catalytic activity">
    <reaction evidence="9">
        <text>ATP + H2O = ADP + phosphate + H(+)</text>
        <dbReference type="Rhea" id="RHEA:13065"/>
        <dbReference type="ChEBI" id="CHEBI:15377"/>
        <dbReference type="ChEBI" id="CHEBI:15378"/>
        <dbReference type="ChEBI" id="CHEBI:30616"/>
        <dbReference type="ChEBI" id="CHEBI:43474"/>
        <dbReference type="ChEBI" id="CHEBI:456216"/>
        <dbReference type="EC" id="5.6.2.3"/>
    </reaction>
</comment>
<comment type="cofactor">
    <cofactor evidence="2">
        <name>Mg(2+)</name>
        <dbReference type="ChEBI" id="CHEBI:18420"/>
    </cofactor>
</comment>
<comment type="cofactor">
    <cofactor evidence="2">
        <name>[4Fe-4S] cluster</name>
        <dbReference type="ChEBI" id="CHEBI:49883"/>
    </cofactor>
    <text evidence="2">Binds 1 [4Fe-4S] cluster.</text>
</comment>
<comment type="subunit">
    <text evidence="2">Component of the 7-subunit TFIIH core complex composed of XPB/ERCC3, XPD/ERCC2, GTF2H1, GTF2H2, GTF2H3, GTF2H4 and GTF2H5, which is active in NER (PubMed:11182546). The core complex associates with the 3-subunit CDK-activating kinase (CAK) module composed of CCNH/cyclin H, CDK7 and MNAT1 to form the 10-subunit holoenzyme (holo-TFIIH) active in transcription. The interaction with GTF2H2 results in the stimulation of the 5'--&gt;3' helicase activity. Component of the MMXD complex, which includes CIAO1, ERCC2, CIAO2B, MMS19 and SLC25A5. Interacts with CIAO1 and CIAO2B; the interaction WITH CIAO2B is direct. Interacts with ATF7IP. Interacts directly with MMS19. Part of TBP-based Pol II pre-initiation complex (PIC), in which Pol II core assembles with general transcription factors and other specific initiation factors including GTF2E1, GTF2E2, GTF2F1, GTF2F2, TCEA1, ERCC2, ERCC3, GTF2H2, GTF2H3, GTF2H4, GTF2H5, GTF2A1, GTF2A2, GTF2B and TBP; this large multi-subunit PIC complex mediates DNA unwinding and targets Pol II core to the transcription start site where the first phosphodiester bond forms.</text>
</comment>
<comment type="subcellular location">
    <subcellularLocation>
        <location evidence="2">Nucleus</location>
    </subcellularLocation>
    <subcellularLocation>
        <location evidence="2">Cytoplasm</location>
        <location evidence="2">Cytoskeleton</location>
        <location evidence="2">Spindle</location>
    </subcellularLocation>
</comment>
<comment type="PTM">
    <text evidence="2">ISGylated.</text>
</comment>
<comment type="similarity">
    <text evidence="9">Belongs to the helicase family. RAD3/XPD subfamily.</text>
</comment>
<feature type="chain" id="PRO_0000101979" description="General transcription and DNA repair factor IIH helicase subunit XPD">
    <location>
        <begin position="1"/>
        <end position="760"/>
    </location>
</feature>
<feature type="domain" description="Helicase ATP-binding" evidence="4">
    <location>
        <begin position="7"/>
        <end position="283"/>
    </location>
</feature>
<feature type="region of interest" description="Mediates interaction with MMS19" evidence="1">
    <location>
        <begin position="438"/>
        <end position="637"/>
    </location>
</feature>
<feature type="short sequence motif" description="DEAH box">
    <location>
        <begin position="234"/>
        <end position="237"/>
    </location>
</feature>
<feature type="short sequence motif" description="Nuclear localization signal" evidence="3">
    <location>
        <begin position="682"/>
        <end position="695"/>
    </location>
</feature>
<feature type="binding site" evidence="4">
    <location>
        <begin position="42"/>
        <end position="49"/>
    </location>
    <ligand>
        <name>ATP</name>
        <dbReference type="ChEBI" id="CHEBI:30616"/>
    </ligand>
</feature>
<feature type="binding site" evidence="2">
    <location>
        <position position="116"/>
    </location>
    <ligand>
        <name>[4Fe-4S] cluster</name>
        <dbReference type="ChEBI" id="CHEBI:49883"/>
    </ligand>
</feature>
<feature type="binding site" evidence="2">
    <location>
        <position position="134"/>
    </location>
    <ligand>
        <name>[4Fe-4S] cluster</name>
        <dbReference type="ChEBI" id="CHEBI:49883"/>
    </ligand>
</feature>
<feature type="binding site" evidence="2">
    <location>
        <position position="155"/>
    </location>
    <ligand>
        <name>[4Fe-4S] cluster</name>
        <dbReference type="ChEBI" id="CHEBI:49883"/>
    </ligand>
</feature>
<feature type="binding site" evidence="2">
    <location>
        <position position="190"/>
    </location>
    <ligand>
        <name>[4Fe-4S] cluster</name>
        <dbReference type="ChEBI" id="CHEBI:49883"/>
    </ligand>
</feature>
<feature type="sequence variant" evidence="6">
    <original>R</original>
    <variation>Q</variation>
    <location>
        <position position="286"/>
    </location>
</feature>
<feature type="mutagenesis site" description="Nucleotide excision repair (NER) deficiency, no change in basal transcription activity, very low 5'-3' helicase activity." evidence="5">
    <original>T</original>
    <variation>I</variation>
    <location>
        <position position="46"/>
    </location>
</feature>
<feature type="mutagenesis site" description="NER deficiency." evidence="5">
    <original>K</original>
    <variation>R</variation>
    <location>
        <position position="48"/>
    </location>
</feature>
<feature type="mutagenesis site" description="NER deficiency, slight deficiency in basal transcription, decreased 5'-3' helicase activity." evidence="5">
    <original>R</original>
    <variation>W</variation>
    <location>
        <position position="75"/>
    </location>
</feature>
<feature type="mutagenesis site" description="NER deficiency." evidence="10">
    <original>C</original>
    <variation>Y</variation>
    <location>
        <position position="116"/>
    </location>
</feature>
<feature type="mutagenesis site" description="NER deficiency." evidence="10">
    <original>G</original>
    <variation>E</variation>
    <location>
        <position position="615"/>
    </location>
</feature>
<feature type="mutagenesis site" description="No effect." evidence="5">
    <original>R</original>
    <variation>W</variation>
    <location>
        <position position="683"/>
    </location>
</feature>
<feature type="mutagenesis site" description="No effect." evidence="5">
    <original>R</original>
    <variation>W</variation>
    <location>
        <position position="722"/>
    </location>
</feature>
<feature type="mutagenesis site" description="No effect." evidence="5">
    <original>A</original>
    <variation>P</variation>
    <location>
        <position position="725"/>
    </location>
</feature>
<proteinExistence type="evidence at protein level"/>
<gene>
    <name evidence="7" type="primary">ERCC2</name>
    <name type="synonym">XPD</name>
</gene>
<protein>
    <recommendedName>
        <fullName>General transcription and DNA repair factor IIH helicase subunit XPD</fullName>
        <shortName>TFIIH subunit XPD</shortName>
        <ecNumber evidence="5">5.6.2.3</ecNumber>
    </recommendedName>
    <alternativeName>
        <fullName evidence="8">CXPD</fullName>
    </alternativeName>
    <alternativeName>
        <fullName evidence="9">DNA 5'-3' helicase XPD</fullName>
    </alternativeName>
    <alternativeName>
        <fullName>DNA excision repair protein ERCC-2</fullName>
    </alternativeName>
    <alternativeName>
        <fullName>DNA repair protein complementing XP-D cells</fullName>
    </alternativeName>
    <alternativeName>
        <fullName>Xeroderma pigmentosum group D-complementing protein</fullName>
    </alternativeName>
</protein>
<keyword id="KW-0004">4Fe-4S</keyword>
<keyword id="KW-0067">ATP-binding</keyword>
<keyword id="KW-0159">Chromosome partition</keyword>
<keyword id="KW-0963">Cytoplasm</keyword>
<keyword id="KW-0206">Cytoskeleton</keyword>
<keyword id="KW-0227">DNA damage</keyword>
<keyword id="KW-0234">DNA repair</keyword>
<keyword id="KW-0238">DNA-binding</keyword>
<keyword id="KW-0347">Helicase</keyword>
<keyword id="KW-0378">Hydrolase</keyword>
<keyword id="KW-0408">Iron</keyword>
<keyword id="KW-0411">Iron-sulfur</keyword>
<keyword id="KW-0413">Isomerase</keyword>
<keyword id="KW-0460">Magnesium</keyword>
<keyword id="KW-0479">Metal-binding</keyword>
<keyword id="KW-0547">Nucleotide-binding</keyword>
<keyword id="KW-0539">Nucleus</keyword>
<keyword id="KW-0804">Transcription</keyword>
<keyword id="KW-0805">Transcription regulation</keyword>
<keyword id="KW-0832">Ubl conjugation</keyword>
<reference key="1">
    <citation type="journal article" date="1994" name="Genomics">
        <title>Cloning and molecular characterization of the Chinese hamster ERCC2 nucleotide excision repair gene.</title>
        <authorList>
            <person name="Kirchner J.M."/>
            <person name="Salazar E.P."/>
            <person name="Lamerdin J.E."/>
            <person name="Montgomery M.A."/>
            <person name="Carrano A.V."/>
            <person name="Weber C.A."/>
        </authorList>
    </citation>
    <scope>NUCLEOTIDE SEQUENCE [GENOMIC DNA]</scope>
    <source>
        <tissue>Lung</tissue>
    </source>
</reference>
<reference key="2">
    <citation type="journal article" date="1995" name="Genomics">
        <authorList>
            <person name="Kirchner J.M."/>
            <person name="Salazar E.P."/>
            <person name="Lamerdin J.E."/>
            <person name="Montgomery M.A."/>
            <person name="Carrano A.V."/>
            <person name="Weber C.A."/>
        </authorList>
    </citation>
    <scope>ERRATUM OF PUBMED:7851887</scope>
</reference>
<reference key="3">
    <citation type="journal article" date="1994" name="Mutat. Res.">
        <title>Molecular analysis of CXPD mutations in the repair-deficient hamster mutants UV5 and UVL-13.</title>
        <authorList>
            <person name="Weber C.A."/>
            <person name="Kirchner J.M."/>
            <person name="Salazar E.P."/>
            <person name="Takayama K."/>
        </authorList>
    </citation>
    <scope>MUTAGENESIS OF CYS-116 AND GLY-615</scope>
    <scope>VARIANT GLN-286</scope>
    <source>
        <tissue>Ovary</tissue>
    </source>
</reference>
<reference key="4">
    <citation type="journal article" date="1995" name="Mutat. Res.">
        <authorList>
            <person name="Weber C.A."/>
            <person name="Kirchner J.M."/>
            <person name="Salazar E.P."/>
            <person name="Takayama K."/>
        </authorList>
    </citation>
    <scope>ERRATUM OF PUBMED:8052270</scope>
</reference>
<reference key="5">
    <citation type="journal article" date="2001" name="Mutat. Res.">
        <title>Codominance associated with overexpression of certain XPD mutations.</title>
        <authorList>
            <person name="Kadkhodayan S."/>
            <person name="Coin F."/>
            <person name="Salazar E.P."/>
            <person name="George J.W."/>
            <person name="Egly J.-M."/>
            <person name="Thompson L.H."/>
        </authorList>
    </citation>
    <scope>FUNCTION AS A 5'-3' HELICASE</scope>
    <scope>CATALYTIC ACTIVITY</scope>
    <scope>SUBUNIT</scope>
    <scope>MUTAGENESIS OF THR-46; LYS-48; ARG-75; ARG-683; ARG-722 AND ALA-725</scope>
</reference>
<dbReference type="EC" id="5.6.2.3" evidence="5"/>
<dbReference type="EMBL" id="U04968">
    <property type="protein sequence ID" value="AAC13749.1"/>
    <property type="molecule type" value="Genomic_DNA"/>
</dbReference>
<dbReference type="EMBL" id="U04967">
    <property type="protein sequence ID" value="AAC13749.1"/>
    <property type="status" value="JOINED"/>
    <property type="molecule type" value="Genomic_DNA"/>
</dbReference>
<dbReference type="PIR" id="A55732">
    <property type="entry name" value="A55732"/>
</dbReference>
<dbReference type="SMR" id="Q60452"/>
<dbReference type="PaxDb" id="10029-NP_001231320.1"/>
<dbReference type="eggNOG" id="KOG1131">
    <property type="taxonomic scope" value="Eukaryota"/>
</dbReference>
<dbReference type="OrthoDB" id="272481at2759"/>
<dbReference type="Proteomes" id="UP000694386">
    <property type="component" value="Unplaced"/>
</dbReference>
<dbReference type="Proteomes" id="UP001108280">
    <property type="component" value="Unplaced"/>
</dbReference>
<dbReference type="GO" id="GO:0070516">
    <property type="term" value="C:CAK-ERCC2 complex"/>
    <property type="evidence" value="ECO:0000250"/>
    <property type="project" value="UniProtKB"/>
</dbReference>
<dbReference type="GO" id="GO:0005737">
    <property type="term" value="C:cytoplasm"/>
    <property type="evidence" value="ECO:0000250"/>
    <property type="project" value="UniProtKB"/>
</dbReference>
<dbReference type="GO" id="GO:0071817">
    <property type="term" value="C:MMXD complex"/>
    <property type="evidence" value="ECO:0000250"/>
    <property type="project" value="UniProtKB"/>
</dbReference>
<dbReference type="GO" id="GO:0005634">
    <property type="term" value="C:nucleus"/>
    <property type="evidence" value="ECO:0000250"/>
    <property type="project" value="UniProtKB"/>
</dbReference>
<dbReference type="GO" id="GO:0005819">
    <property type="term" value="C:spindle"/>
    <property type="evidence" value="ECO:0000250"/>
    <property type="project" value="UniProtKB"/>
</dbReference>
<dbReference type="GO" id="GO:0005675">
    <property type="term" value="C:transcription factor TFIIH holo complex"/>
    <property type="evidence" value="ECO:0000250"/>
    <property type="project" value="UniProtKB"/>
</dbReference>
<dbReference type="GO" id="GO:0051539">
    <property type="term" value="F:4 iron, 4 sulfur cluster binding"/>
    <property type="evidence" value="ECO:0007669"/>
    <property type="project" value="UniProtKB-KW"/>
</dbReference>
<dbReference type="GO" id="GO:0043139">
    <property type="term" value="F:5'-3' DNA helicase activity"/>
    <property type="evidence" value="ECO:0000250"/>
    <property type="project" value="UniProtKB"/>
</dbReference>
<dbReference type="GO" id="GO:0005524">
    <property type="term" value="F:ATP binding"/>
    <property type="evidence" value="ECO:0007669"/>
    <property type="project" value="UniProtKB-KW"/>
</dbReference>
<dbReference type="GO" id="GO:0016887">
    <property type="term" value="F:ATP hydrolysis activity"/>
    <property type="evidence" value="ECO:0007669"/>
    <property type="project" value="RHEA"/>
</dbReference>
<dbReference type="GO" id="GO:0003684">
    <property type="term" value="F:damaged DNA binding"/>
    <property type="evidence" value="ECO:0007669"/>
    <property type="project" value="TreeGrafter"/>
</dbReference>
<dbReference type="GO" id="GO:0046872">
    <property type="term" value="F:metal ion binding"/>
    <property type="evidence" value="ECO:0007669"/>
    <property type="project" value="UniProtKB-KW"/>
</dbReference>
<dbReference type="GO" id="GO:0006915">
    <property type="term" value="P:apoptotic process"/>
    <property type="evidence" value="ECO:0000250"/>
    <property type="project" value="UniProtKB"/>
</dbReference>
<dbReference type="GO" id="GO:0007059">
    <property type="term" value="P:chromosome segregation"/>
    <property type="evidence" value="ECO:0000250"/>
    <property type="project" value="UniProtKB"/>
</dbReference>
<dbReference type="GO" id="GO:0035315">
    <property type="term" value="P:hair cell differentiation"/>
    <property type="evidence" value="ECO:0000250"/>
    <property type="project" value="UniProtKB"/>
</dbReference>
<dbReference type="GO" id="GO:0006289">
    <property type="term" value="P:nucleotide-excision repair"/>
    <property type="evidence" value="ECO:0000250"/>
    <property type="project" value="UniProtKB"/>
</dbReference>
<dbReference type="GO" id="GO:0045951">
    <property type="term" value="P:positive regulation of mitotic recombination"/>
    <property type="evidence" value="ECO:0007669"/>
    <property type="project" value="TreeGrafter"/>
</dbReference>
<dbReference type="GO" id="GO:1901990">
    <property type="term" value="P:regulation of mitotic cell cycle phase transition"/>
    <property type="evidence" value="ECO:0000250"/>
    <property type="project" value="UniProtKB"/>
</dbReference>
<dbReference type="GO" id="GO:0006979">
    <property type="term" value="P:response to oxidative stress"/>
    <property type="evidence" value="ECO:0000250"/>
    <property type="project" value="UniProtKB"/>
</dbReference>
<dbReference type="GO" id="GO:0006366">
    <property type="term" value="P:transcription by RNA polymerase II"/>
    <property type="evidence" value="ECO:0000250"/>
    <property type="project" value="UniProtKB"/>
</dbReference>
<dbReference type="GO" id="GO:0006367">
    <property type="term" value="P:transcription initiation at RNA polymerase II promoter"/>
    <property type="evidence" value="ECO:0000250"/>
    <property type="project" value="UniProtKB"/>
</dbReference>
<dbReference type="GO" id="GO:0006283">
    <property type="term" value="P:transcription-coupled nucleotide-excision repair"/>
    <property type="evidence" value="ECO:0000250"/>
    <property type="project" value="UniProtKB"/>
</dbReference>
<dbReference type="CDD" id="cd17969">
    <property type="entry name" value="DEAHc_XPD"/>
    <property type="match status" value="1"/>
</dbReference>
<dbReference type="CDD" id="cd18788">
    <property type="entry name" value="SF2_C_XPD"/>
    <property type="match status" value="1"/>
</dbReference>
<dbReference type="FunFam" id="3.40.50.300:FF:000135">
    <property type="entry name" value="DNA repair helicase RAD3, putative"/>
    <property type="match status" value="1"/>
</dbReference>
<dbReference type="FunFam" id="3.40.50.300:FF:000128">
    <property type="entry name" value="Putative DNA repair helicase RAD3"/>
    <property type="match status" value="1"/>
</dbReference>
<dbReference type="FunFam" id="3.40.50.300:FF:000381">
    <property type="entry name" value="TFIIH basal transcription factor complex helicase subunit"/>
    <property type="match status" value="1"/>
</dbReference>
<dbReference type="Gene3D" id="3.40.50.300">
    <property type="entry name" value="P-loop containing nucleotide triphosphate hydrolases"/>
    <property type="match status" value="2"/>
</dbReference>
<dbReference type="InterPro" id="IPR006555">
    <property type="entry name" value="ATP-dep_Helicase_C"/>
</dbReference>
<dbReference type="InterPro" id="IPR045028">
    <property type="entry name" value="DinG/Rad3-like"/>
</dbReference>
<dbReference type="InterPro" id="IPR002464">
    <property type="entry name" value="DNA/RNA_helicase_DEAH_CS"/>
</dbReference>
<dbReference type="InterPro" id="IPR010643">
    <property type="entry name" value="HBB"/>
</dbReference>
<dbReference type="InterPro" id="IPR014013">
    <property type="entry name" value="Helic_SF1/SF2_ATP-bd_DinG/Rad3"/>
</dbReference>
<dbReference type="InterPro" id="IPR006554">
    <property type="entry name" value="Helicase-like_DEXD_c2"/>
</dbReference>
<dbReference type="InterPro" id="IPR027417">
    <property type="entry name" value="P-loop_NTPase"/>
</dbReference>
<dbReference type="InterPro" id="IPR010614">
    <property type="entry name" value="RAD3-like_helicase_DEAD"/>
</dbReference>
<dbReference type="InterPro" id="IPR013020">
    <property type="entry name" value="Rad3/Chl1-like"/>
</dbReference>
<dbReference type="InterPro" id="IPR001945">
    <property type="entry name" value="RAD3/XPD"/>
</dbReference>
<dbReference type="NCBIfam" id="TIGR00604">
    <property type="entry name" value="rad3"/>
    <property type="match status" value="1"/>
</dbReference>
<dbReference type="PANTHER" id="PTHR11472">
    <property type="entry name" value="DNA REPAIR DEAD HELICASE RAD3/XP-D SUBFAMILY MEMBER"/>
    <property type="match status" value="1"/>
</dbReference>
<dbReference type="PANTHER" id="PTHR11472:SF1">
    <property type="entry name" value="GENERAL TRANSCRIPTION AND DNA REPAIR FACTOR IIH HELICASE SUBUNIT XPD"/>
    <property type="match status" value="1"/>
</dbReference>
<dbReference type="Pfam" id="PF06733">
    <property type="entry name" value="DEAD_2"/>
    <property type="match status" value="1"/>
</dbReference>
<dbReference type="Pfam" id="PF06777">
    <property type="entry name" value="HBB"/>
    <property type="match status" value="1"/>
</dbReference>
<dbReference type="Pfam" id="PF13307">
    <property type="entry name" value="Helicase_C_2"/>
    <property type="match status" value="1"/>
</dbReference>
<dbReference type="PRINTS" id="PR00852">
    <property type="entry name" value="XRODRMPGMNTD"/>
</dbReference>
<dbReference type="SMART" id="SM00488">
    <property type="entry name" value="DEXDc2"/>
    <property type="match status" value="1"/>
</dbReference>
<dbReference type="SMART" id="SM00491">
    <property type="entry name" value="HELICc2"/>
    <property type="match status" value="1"/>
</dbReference>
<dbReference type="SUPFAM" id="SSF52540">
    <property type="entry name" value="P-loop containing nucleoside triphosphate hydrolases"/>
    <property type="match status" value="1"/>
</dbReference>
<dbReference type="PROSITE" id="PS00690">
    <property type="entry name" value="DEAH_ATP_HELICASE"/>
    <property type="match status" value="1"/>
</dbReference>
<dbReference type="PROSITE" id="PS51193">
    <property type="entry name" value="HELICASE_ATP_BIND_2"/>
    <property type="match status" value="1"/>
</dbReference>
<sequence length="760" mass="86752">MKLNVDGLLVYFPYDYIYPEQFSYMLELKRTLDAKGHGVLEMPSGTGKTVSLLALIVAYQRAFPLEVTKLIYCSRTVPEIEKVIEELRKLLSFYEQQEGEKLPFLGLALSSRKNLCIHPEVTPLRFGKDVDGKCHSLTASYVRAQYQQDASLPHCRFYEEFDAHGRQVPLPAGIYNLDDLKALGQRQGWCPYFLARYSILHANVVVYSYHYLLDPKIADLVSKELARKAVVVFDEAHNIDNVCIDSMSVNLTRRTLDRCQSNLDTLQKTVLRIKETDEQRLRDEYRRLVEGLREASAARETDAHLANPVLPDEVLQEAVPGSIRTAEHFLGFLRRLLEYVKWRLRVQHVVQESPPAFLSGLAQRVCIQRKPLRFCAERLRSLLHTLEIADLADFSPLTLLANFATLVSTYAKGFTIIIEPFDDRTPTIANPILHFSCMDASLAIKPVFERFQSVIITSGTLSPLDIYPKILDFHPVTMATFTMTLARVCLCPMIIGRGNDQVAISSKFETREDIAVIRNYGNLLLEMSAVVPDGIVAFFTSYQYMESTVASWYEQGILENIQRNKLLFIETQDGAETSVALEKYQEACENGRGAILLSVARGKVSEGIDFVHHYGRAVIMFGVPYVYTQSRILKARLEYLRDQFQIRENDFLTFDAMRHAAQCVGRAIRGKTDYGLMVFADKRFARADKRGKLPRWIQEHLTDSNLNLTVDEGVQVAKYFLRQMAQPFHREDQLGLSLLSLEQLQSEETLRRVEQIAQQL</sequence>
<name>ERCC2_CRIGR</name>